<keyword id="KW-0963">Cytoplasm</keyword>
<keyword id="KW-0413">Isomerase</keyword>
<name>LSRG_ECOSM</name>
<feature type="chain" id="PRO_0000351565" description="(4S)-4-hydroxy-5-phosphonooxypentane-2,3-dione isomerase">
    <location>
        <begin position="1"/>
        <end position="96"/>
    </location>
</feature>
<feature type="domain" description="ABM" evidence="1">
    <location>
        <begin position="2"/>
        <end position="91"/>
    </location>
</feature>
<sequence>MHVTLVEINVHEDKVDEFIEVFRQNHLGSVQEEGNLRFDVLQDPEVNSRFYIYEAYKDEDAVAFHKTTPHYKTCVAKLESLMTGPRKKRLFNGLMP</sequence>
<organism>
    <name type="scientific">Escherichia coli (strain SMS-3-5 / SECEC)</name>
    <dbReference type="NCBI Taxonomy" id="439855"/>
    <lineage>
        <taxon>Bacteria</taxon>
        <taxon>Pseudomonadati</taxon>
        <taxon>Pseudomonadota</taxon>
        <taxon>Gammaproteobacteria</taxon>
        <taxon>Enterobacterales</taxon>
        <taxon>Enterobacteriaceae</taxon>
        <taxon>Escherichia</taxon>
    </lineage>
</organism>
<accession>B1LF97</accession>
<dbReference type="EC" id="5.3.1.32" evidence="1"/>
<dbReference type="EMBL" id="CP000970">
    <property type="protein sequence ID" value="ACB18602.1"/>
    <property type="molecule type" value="Genomic_DNA"/>
</dbReference>
<dbReference type="RefSeq" id="WP_000558527.1">
    <property type="nucleotide sequence ID" value="NC_010498.1"/>
</dbReference>
<dbReference type="SMR" id="B1LF97"/>
<dbReference type="GeneID" id="75057398"/>
<dbReference type="KEGG" id="ecm:EcSMS35_1654"/>
<dbReference type="HOGENOM" id="CLU_131496_3_0_6"/>
<dbReference type="Proteomes" id="UP000007011">
    <property type="component" value="Chromosome"/>
</dbReference>
<dbReference type="GO" id="GO:0005829">
    <property type="term" value="C:cytosol"/>
    <property type="evidence" value="ECO:0007669"/>
    <property type="project" value="TreeGrafter"/>
</dbReference>
<dbReference type="GO" id="GO:0002952">
    <property type="term" value="F:(4S)-4-hydroxy-5-phosphonooxypentane-2,3-dione isomerase activity"/>
    <property type="evidence" value="ECO:0007669"/>
    <property type="project" value="UniProtKB-EC"/>
</dbReference>
<dbReference type="GO" id="GO:0016491">
    <property type="term" value="F:oxidoreductase activity"/>
    <property type="evidence" value="ECO:0007669"/>
    <property type="project" value="TreeGrafter"/>
</dbReference>
<dbReference type="FunFam" id="3.30.70.100:FF:000016">
    <property type="entry name" value="(4S)-4-hydroxy-5-phosphonooxypentane-2,3-dione isomerase"/>
    <property type="match status" value="1"/>
</dbReference>
<dbReference type="Gene3D" id="3.30.70.100">
    <property type="match status" value="1"/>
</dbReference>
<dbReference type="HAMAP" id="MF_02051">
    <property type="entry name" value="LsrG"/>
    <property type="match status" value="1"/>
</dbReference>
<dbReference type="InterPro" id="IPR007138">
    <property type="entry name" value="ABM_dom"/>
</dbReference>
<dbReference type="InterPro" id="IPR050744">
    <property type="entry name" value="AI-2_Isomerase_LsrG"/>
</dbReference>
<dbReference type="InterPro" id="IPR011008">
    <property type="entry name" value="Dimeric_a/b-barrel"/>
</dbReference>
<dbReference type="InterPro" id="IPR033672">
    <property type="entry name" value="LsrG"/>
</dbReference>
<dbReference type="NCBIfam" id="NF007791">
    <property type="entry name" value="PRK10486.1"/>
    <property type="match status" value="1"/>
</dbReference>
<dbReference type="PANTHER" id="PTHR33336:SF1">
    <property type="entry name" value="(4S)-4-HYDROXY-5-PHOSPHONOOXYPENTANE-2,3-DIONE ISOMERASE"/>
    <property type="match status" value="1"/>
</dbReference>
<dbReference type="PANTHER" id="PTHR33336">
    <property type="entry name" value="QUINOL MONOOXYGENASE YGIN-RELATED"/>
    <property type="match status" value="1"/>
</dbReference>
<dbReference type="Pfam" id="PF03992">
    <property type="entry name" value="ABM"/>
    <property type="match status" value="1"/>
</dbReference>
<dbReference type="SUPFAM" id="SSF54909">
    <property type="entry name" value="Dimeric alpha+beta barrel"/>
    <property type="match status" value="1"/>
</dbReference>
<dbReference type="PROSITE" id="PS51725">
    <property type="entry name" value="ABM"/>
    <property type="match status" value="1"/>
</dbReference>
<comment type="function">
    <text evidence="1">Involved in the degradation of phospho-AI-2, thereby terminating induction of the lsr operon and closing the AI-2 signaling cycle. Catalyzes the conversion of (4S)-4-hydroxy-5-phosphonooxypentane-2,3-dione (P-DPD) to 3-hydroxy-5-phosphonooxypentane-2,4-dione (P-HPD).</text>
</comment>
<comment type="catalytic activity">
    <reaction evidence="1">
        <text>(2S)-2-hydroxy-3,4-dioxopentyl phosphate = 3-hydroxy-2,4-dioxopentyl phosphate</text>
        <dbReference type="Rhea" id="RHEA:44360"/>
        <dbReference type="ChEBI" id="CHEBI:71677"/>
        <dbReference type="ChEBI" id="CHEBI:84359"/>
        <dbReference type="EC" id="5.3.1.32"/>
    </reaction>
</comment>
<comment type="subunit">
    <text evidence="1">Homodimer.</text>
</comment>
<comment type="subcellular location">
    <subcellularLocation>
        <location evidence="1">Cytoplasm</location>
    </subcellularLocation>
</comment>
<comment type="similarity">
    <text evidence="1">Belongs to the LsrG family.</text>
</comment>
<proteinExistence type="inferred from homology"/>
<protein>
    <recommendedName>
        <fullName evidence="1">(4S)-4-hydroxy-5-phosphonooxypentane-2,3-dione isomerase</fullName>
        <ecNumber evidence="1">5.3.1.32</ecNumber>
    </recommendedName>
    <alternativeName>
        <fullName evidence="1">Autoinducer 2-degrading protein LsrG</fullName>
        <shortName evidence="1">AI-2-degrading protein LsrG</shortName>
    </alternativeName>
    <alternativeName>
        <fullName evidence="1">Phospho-(S)-4,5-dihydroxy-2,3-pentanedione isomerase</fullName>
    </alternativeName>
    <alternativeName>
        <fullName evidence="1">Phospho-AI-2 isomerase</fullName>
    </alternativeName>
</protein>
<evidence type="ECO:0000255" key="1">
    <source>
        <dbReference type="HAMAP-Rule" id="MF_02051"/>
    </source>
</evidence>
<gene>
    <name evidence="1" type="primary">lsrG</name>
    <name type="ordered locus">EcSMS35_1654</name>
</gene>
<reference key="1">
    <citation type="journal article" date="2008" name="J. Bacteriol.">
        <title>Insights into the environmental resistance gene pool from the genome sequence of the multidrug-resistant environmental isolate Escherichia coli SMS-3-5.</title>
        <authorList>
            <person name="Fricke W.F."/>
            <person name="Wright M.S."/>
            <person name="Lindell A.H."/>
            <person name="Harkins D.M."/>
            <person name="Baker-Austin C."/>
            <person name="Ravel J."/>
            <person name="Stepanauskas R."/>
        </authorList>
    </citation>
    <scope>NUCLEOTIDE SEQUENCE [LARGE SCALE GENOMIC DNA]</scope>
    <source>
        <strain>SMS-3-5 / SECEC</strain>
    </source>
</reference>